<comment type="domain">
    <text evidence="1">Requires a bound zinc ion for normal folding and solubility.</text>
</comment>
<comment type="similarity">
    <text evidence="2">Belongs to the UPF0587 family.</text>
</comment>
<protein>
    <recommendedName>
        <fullName>UPF0587 protein</fullName>
    </recommendedName>
</protein>
<organism>
    <name type="scientific">Dictyostelium discoideum</name>
    <name type="common">Social amoeba</name>
    <dbReference type="NCBI Taxonomy" id="44689"/>
    <lineage>
        <taxon>Eukaryota</taxon>
        <taxon>Amoebozoa</taxon>
        <taxon>Evosea</taxon>
        <taxon>Eumycetozoa</taxon>
        <taxon>Dictyostelia</taxon>
        <taxon>Dictyosteliales</taxon>
        <taxon>Dictyosteliaceae</taxon>
        <taxon>Dictyostelium</taxon>
    </lineage>
</organism>
<sequence>MVRQSISLKAELEEIQNIFPATYKIFFLKIKCSNCGEIPDKWIGLDKSNIEVIGKSNVNLATKCKGCNRENSIVIEDTDYSSRTIESEKDFEIARFDCRGVEIEEFDPRDNWIVVSSSGKEYKDVDLEEGEWSEFEERTSTSLTILSIESSIKKIK</sequence>
<proteinExistence type="inferred from homology"/>
<gene>
    <name type="ORF">DDB_G0270194</name>
</gene>
<dbReference type="EMBL" id="AAFI02000005">
    <property type="protein sequence ID" value="EAL72447.1"/>
    <property type="molecule type" value="Genomic_DNA"/>
</dbReference>
<dbReference type="RefSeq" id="XP_646609.1">
    <property type="nucleotide sequence ID" value="XM_641517.1"/>
</dbReference>
<dbReference type="SMR" id="Q55C72"/>
<dbReference type="FunCoup" id="Q55C72">
    <property type="interactions" value="132"/>
</dbReference>
<dbReference type="PaxDb" id="44689-DDB0267136"/>
<dbReference type="EnsemblProtists" id="EAL72447">
    <property type="protein sequence ID" value="EAL72447"/>
    <property type="gene ID" value="DDB_G0270194"/>
</dbReference>
<dbReference type="GeneID" id="8617581"/>
<dbReference type="KEGG" id="ddi:DDB_G0270194"/>
<dbReference type="dictyBase" id="DDB_G0270194"/>
<dbReference type="VEuPathDB" id="AmoebaDB:DDB_G0270194"/>
<dbReference type="eggNOG" id="KOG1296">
    <property type="taxonomic scope" value="Eukaryota"/>
</dbReference>
<dbReference type="HOGENOM" id="CLU_114688_1_0_1"/>
<dbReference type="InParanoid" id="Q55C72"/>
<dbReference type="OMA" id="GCNRENS"/>
<dbReference type="PhylomeDB" id="Q55C72"/>
<dbReference type="PRO" id="PR:Q55C72"/>
<dbReference type="Proteomes" id="UP000002195">
    <property type="component" value="Chromosome 1"/>
</dbReference>
<dbReference type="GO" id="GO:0008270">
    <property type="term" value="F:zinc ion binding"/>
    <property type="evidence" value="ECO:0000318"/>
    <property type="project" value="GO_Central"/>
</dbReference>
<dbReference type="InterPro" id="IPR008584">
    <property type="entry name" value="CXXC_Zn-binding_euk"/>
</dbReference>
<dbReference type="PANTHER" id="PTHR12857">
    <property type="entry name" value="CXXC MOTIF CONTAINING ZINC BINDING PROTEIN"/>
    <property type="match status" value="1"/>
</dbReference>
<dbReference type="PANTHER" id="PTHR12857:SF0">
    <property type="entry name" value="CXXC MOTIF CONTAINING ZINC BINDING PROTEIN"/>
    <property type="match status" value="1"/>
</dbReference>
<dbReference type="Pfam" id="PF05907">
    <property type="entry name" value="CXXC_Zn-b_euk"/>
    <property type="match status" value="1"/>
</dbReference>
<dbReference type="SUPFAM" id="SSF141678">
    <property type="entry name" value="MAL13P1.257-like"/>
    <property type="match status" value="1"/>
</dbReference>
<name>U587_DICDI</name>
<accession>Q55C72</accession>
<feature type="chain" id="PRO_0000337872" description="UPF0587 protein">
    <location>
        <begin position="1"/>
        <end position="156"/>
    </location>
</feature>
<feature type="binding site" evidence="1">
    <location>
        <position position="32"/>
    </location>
    <ligand>
        <name>Zn(2+)</name>
        <dbReference type="ChEBI" id="CHEBI:29105"/>
    </ligand>
</feature>
<feature type="binding site" evidence="1">
    <location>
        <position position="35"/>
    </location>
    <ligand>
        <name>Zn(2+)</name>
        <dbReference type="ChEBI" id="CHEBI:29105"/>
    </ligand>
</feature>
<feature type="binding site" evidence="1">
    <location>
        <position position="64"/>
    </location>
    <ligand>
        <name>Zn(2+)</name>
        <dbReference type="ChEBI" id="CHEBI:29105"/>
    </ligand>
</feature>
<feature type="binding site" evidence="1">
    <location>
        <position position="67"/>
    </location>
    <ligand>
        <name>Zn(2+)</name>
        <dbReference type="ChEBI" id="CHEBI:29105"/>
    </ligand>
</feature>
<reference key="1">
    <citation type="journal article" date="2005" name="Nature">
        <title>The genome of the social amoeba Dictyostelium discoideum.</title>
        <authorList>
            <person name="Eichinger L."/>
            <person name="Pachebat J.A."/>
            <person name="Gloeckner G."/>
            <person name="Rajandream M.A."/>
            <person name="Sucgang R."/>
            <person name="Berriman M."/>
            <person name="Song J."/>
            <person name="Olsen R."/>
            <person name="Szafranski K."/>
            <person name="Xu Q."/>
            <person name="Tunggal B."/>
            <person name="Kummerfeld S."/>
            <person name="Madera M."/>
            <person name="Konfortov B.A."/>
            <person name="Rivero F."/>
            <person name="Bankier A.T."/>
            <person name="Lehmann R."/>
            <person name="Hamlin N."/>
            <person name="Davies R."/>
            <person name="Gaudet P."/>
            <person name="Fey P."/>
            <person name="Pilcher K."/>
            <person name="Chen G."/>
            <person name="Saunders D."/>
            <person name="Sodergren E.J."/>
            <person name="Davis P."/>
            <person name="Kerhornou A."/>
            <person name="Nie X."/>
            <person name="Hall N."/>
            <person name="Anjard C."/>
            <person name="Hemphill L."/>
            <person name="Bason N."/>
            <person name="Farbrother P."/>
            <person name="Desany B."/>
            <person name="Just E."/>
            <person name="Morio T."/>
            <person name="Rost R."/>
            <person name="Churcher C.M."/>
            <person name="Cooper J."/>
            <person name="Haydock S."/>
            <person name="van Driessche N."/>
            <person name="Cronin A."/>
            <person name="Goodhead I."/>
            <person name="Muzny D.M."/>
            <person name="Mourier T."/>
            <person name="Pain A."/>
            <person name="Lu M."/>
            <person name="Harper D."/>
            <person name="Lindsay R."/>
            <person name="Hauser H."/>
            <person name="James K.D."/>
            <person name="Quiles M."/>
            <person name="Madan Babu M."/>
            <person name="Saito T."/>
            <person name="Buchrieser C."/>
            <person name="Wardroper A."/>
            <person name="Felder M."/>
            <person name="Thangavelu M."/>
            <person name="Johnson D."/>
            <person name="Knights A."/>
            <person name="Loulseged H."/>
            <person name="Mungall K.L."/>
            <person name="Oliver K."/>
            <person name="Price C."/>
            <person name="Quail M.A."/>
            <person name="Urushihara H."/>
            <person name="Hernandez J."/>
            <person name="Rabbinowitsch E."/>
            <person name="Steffen D."/>
            <person name="Sanders M."/>
            <person name="Ma J."/>
            <person name="Kohara Y."/>
            <person name="Sharp S."/>
            <person name="Simmonds M.N."/>
            <person name="Spiegler S."/>
            <person name="Tivey A."/>
            <person name="Sugano S."/>
            <person name="White B."/>
            <person name="Walker D."/>
            <person name="Woodward J.R."/>
            <person name="Winckler T."/>
            <person name="Tanaka Y."/>
            <person name="Shaulsky G."/>
            <person name="Schleicher M."/>
            <person name="Weinstock G.M."/>
            <person name="Rosenthal A."/>
            <person name="Cox E.C."/>
            <person name="Chisholm R.L."/>
            <person name="Gibbs R.A."/>
            <person name="Loomis W.F."/>
            <person name="Platzer M."/>
            <person name="Kay R.R."/>
            <person name="Williams J.G."/>
            <person name="Dear P.H."/>
            <person name="Noegel A.A."/>
            <person name="Barrell B.G."/>
            <person name="Kuspa A."/>
        </authorList>
    </citation>
    <scope>NUCLEOTIDE SEQUENCE [LARGE SCALE GENOMIC DNA]</scope>
    <source>
        <strain>AX4</strain>
    </source>
</reference>
<keyword id="KW-0479">Metal-binding</keyword>
<keyword id="KW-1185">Reference proteome</keyword>
<keyword id="KW-0862">Zinc</keyword>
<evidence type="ECO:0000250" key="1">
    <source>
        <dbReference type="UniProtKB" id="Q9NWV4"/>
    </source>
</evidence>
<evidence type="ECO:0000305" key="2"/>